<dbReference type="EC" id="3.2.1.18" evidence="1"/>
<dbReference type="EMBL" id="M30633">
    <property type="protein sequence ID" value="AAA43735.1"/>
    <property type="molecule type" value="Genomic_RNA"/>
</dbReference>
<dbReference type="PIR" id="I46347">
    <property type="entry name" value="I46347"/>
</dbReference>
<dbReference type="SMR" id="P16195"/>
<dbReference type="CAZy" id="GH34">
    <property type="family name" value="Glycoside Hydrolase Family 34"/>
</dbReference>
<dbReference type="GlyCosmos" id="P16195">
    <property type="glycosylation" value="4 sites, No reported glycans"/>
</dbReference>
<dbReference type="GO" id="GO:0020002">
    <property type="term" value="C:host cell plasma membrane"/>
    <property type="evidence" value="ECO:0007669"/>
    <property type="project" value="UniProtKB-SubCell"/>
</dbReference>
<dbReference type="GO" id="GO:0016020">
    <property type="term" value="C:membrane"/>
    <property type="evidence" value="ECO:0007669"/>
    <property type="project" value="UniProtKB-UniRule"/>
</dbReference>
<dbReference type="GO" id="GO:0055036">
    <property type="term" value="C:virion membrane"/>
    <property type="evidence" value="ECO:0007669"/>
    <property type="project" value="UniProtKB-SubCell"/>
</dbReference>
<dbReference type="GO" id="GO:0004308">
    <property type="term" value="F:exo-alpha-sialidase activity"/>
    <property type="evidence" value="ECO:0007669"/>
    <property type="project" value="UniProtKB-UniRule"/>
</dbReference>
<dbReference type="GO" id="GO:0046872">
    <property type="term" value="F:metal ion binding"/>
    <property type="evidence" value="ECO:0007669"/>
    <property type="project" value="UniProtKB-UniRule"/>
</dbReference>
<dbReference type="GO" id="GO:0005975">
    <property type="term" value="P:carbohydrate metabolic process"/>
    <property type="evidence" value="ECO:0007669"/>
    <property type="project" value="InterPro"/>
</dbReference>
<dbReference type="GO" id="GO:0046761">
    <property type="term" value="P:viral budding from plasma membrane"/>
    <property type="evidence" value="ECO:0007669"/>
    <property type="project" value="UniProtKB-UniRule"/>
</dbReference>
<dbReference type="Gene3D" id="2.120.10.10">
    <property type="match status" value="1"/>
</dbReference>
<dbReference type="HAMAP" id="MF_04071">
    <property type="entry name" value="INFV_NRAM"/>
    <property type="match status" value="1"/>
</dbReference>
<dbReference type="InterPro" id="IPR001860">
    <property type="entry name" value="Glyco_hydro_34"/>
</dbReference>
<dbReference type="InterPro" id="IPR036278">
    <property type="entry name" value="Sialidase_sf"/>
</dbReference>
<dbReference type="Pfam" id="PF00064">
    <property type="entry name" value="Neur"/>
    <property type="match status" value="1"/>
</dbReference>
<dbReference type="SUPFAM" id="SSF50939">
    <property type="entry name" value="Sialidases"/>
    <property type="match status" value="1"/>
</dbReference>
<sequence>MLPSTIQTLTLFLTSGGVLLSLYVSASLSYLLYSDILLKFSPTKRTAPTMSLECVNVSNAQAVNHSATKEMTFLLPEPEWTYPRLSCQGSTFQKALLISPHRFGETRGNSAPLIIREPFVACGPKECRHFALTHYAAQPGGYYNGTRKDRNKLRHLISVKLGKIPTVENSIFHMAAWSGSACHDGREWTYIGVDGPDSDALIKIKYGEAYTDTYHSYAHNILRTQESACNCIGGDCYLMITDGSASGISKCRFLKIREGRIIKEIFPAGRVEHTEECTCGFASNKTIECACRDNSYTAKRPFVKLNVETDTAEIRLMCTETYLDTPRPDDGSITGPCESNGDKGLGGIKGGFVHQRMASKIGRWYSRTMSKTERMGMELYVKYDGDPWTDSDALAPSGVMVSIKEPGWYSFGFEIKDKKCDVPCIGIEMVHDGGKETWHSAATAIYCLMGSGQLLWDTVTGVDMAL</sequence>
<protein>
    <recommendedName>
        <fullName evidence="1">Neuraminidase</fullName>
        <ecNumber evidence="1">3.2.1.18</ecNumber>
    </recommendedName>
</protein>
<proteinExistence type="inferred from homology"/>
<comment type="function">
    <text evidence="1">Catalyzes the removal of terminal sialic acid residues from viral and cellular glycoconjugates. Cleaves off the terminal sialic acids on the glycosylated HA during virus budding to facilitate virus release. Additionally helps virus spread through the circulation by further removing sialic acids from the cell surface. These cleavages prevent self-aggregation and ensure the efficient spread of the progeny virus from cell to cell. Otherwise, infection would be limited to one round of replication. Described as a receptor-destroying enzyme because it cleaves a terminal sialic acid from the cellular receptors. May facilitate viral invasion of the upper airways by cleaving the sialic acid moieties on the mucin of the airway epithelial cells. Likely to plays a role in the budding process through its association with lipid rafts during intracellular transport. May additionally display a raft-association independent effect on budding. Plays a role in the determination of host range restriction on replication and virulence. Sialidase activity in late endosome/lysosome traffic seems to enhance virus replication.</text>
</comment>
<comment type="catalytic activity">
    <reaction evidence="1">
        <text>Hydrolysis of alpha-(2-&gt;3)-, alpha-(2-&gt;6)-, alpha-(2-&gt;8)- glycosidic linkages of terminal sialic acid residues in oligosaccharides, glycoproteins, glycolipids, colominic acid and synthetic substrates.</text>
        <dbReference type="EC" id="3.2.1.18"/>
    </reaction>
</comment>
<comment type="cofactor">
    <cofactor evidence="1">
        <name>Ca(2+)</name>
        <dbReference type="ChEBI" id="CHEBI:29108"/>
    </cofactor>
</comment>
<comment type="activity regulation">
    <text evidence="1">Inhibited by the neuraminidase inhibitors zanamivir (Relenza) and oseltamivir (Tamiflu). These drugs interfere with the release of progeny virus from infected cells and are effective against all influenza strains. Resistance to neuraminidase inhibitors is quite rare.</text>
</comment>
<comment type="subunit">
    <text evidence="1">Homotetramer.</text>
</comment>
<comment type="subcellular location">
    <subcellularLocation>
        <location evidence="1">Virion membrane</location>
    </subcellularLocation>
    <subcellularLocation>
        <location evidence="1">Host apical cell membrane</location>
        <topology evidence="1">Single-pass type II membrane protein</topology>
    </subcellularLocation>
    <text evidence="1">Preferentially accumulates at the apical plasma membrane in infected polarized epithelial cells, which is the virus assembly site. Uses lipid rafts for cell surface transport and apical sorting. In the virion, forms a mushroom-shaped spike on the surface of the membrane.</text>
</comment>
<comment type="domain">
    <text evidence="1">Intact N-terminus is essential for virion morphogenesis. Possesses two apical sorting signals, one in the ectodomain, which is likely to be a glycan, and the other in the transmembrane domain. The transmembrane domain also plays a role in lipid raft association.</text>
</comment>
<comment type="PTM">
    <text evidence="1">N-glycosylated.</text>
</comment>
<comment type="miscellaneous">
    <text>The influenza B genome consist of 8 RNA segments. Genetic variation of hemagglutinin and/or neuraminidase genes results in the emergence of new influenza strains. The mechanism of variation can be the result of point mutations or the result of genetic reassortment between segments of two different strains.</text>
</comment>
<comment type="similarity">
    <text evidence="1">Belongs to the glycosyl hydrolase 34 family.</text>
</comment>
<keyword id="KW-0106">Calcium</keyword>
<keyword id="KW-1015">Disulfide bond</keyword>
<keyword id="KW-0325">Glycoprotein</keyword>
<keyword id="KW-0326">Glycosidase</keyword>
<keyword id="KW-1032">Host cell membrane</keyword>
<keyword id="KW-1043">Host membrane</keyword>
<keyword id="KW-0378">Hydrolase</keyword>
<keyword id="KW-0472">Membrane</keyword>
<keyword id="KW-0479">Metal-binding</keyword>
<keyword id="KW-0735">Signal-anchor</keyword>
<keyword id="KW-0812">Transmembrane</keyword>
<keyword id="KW-1133">Transmembrane helix</keyword>
<keyword id="KW-0946">Virion</keyword>
<gene>
    <name evidence="1" type="primary">NA</name>
</gene>
<feature type="chain" id="PRO_0000078734" description="Neuraminidase">
    <location>
        <begin position="1"/>
        <end position="466"/>
    </location>
</feature>
<feature type="topological domain" description="Intravirion" evidence="1">
    <location>
        <begin position="1"/>
        <end position="11"/>
    </location>
</feature>
<feature type="transmembrane region" description="Helical" evidence="1">
    <location>
        <begin position="12"/>
        <end position="34"/>
    </location>
</feature>
<feature type="topological domain" description="Virion surface" evidence="1">
    <location>
        <begin position="35"/>
        <end position="466"/>
    </location>
</feature>
<feature type="region of interest" description="Involved in apical transport and lipid raft association" evidence="1">
    <location>
        <begin position="13"/>
        <end position="35"/>
    </location>
</feature>
<feature type="region of interest" description="Hypervariable stalk region" evidence="1">
    <location>
        <begin position="38"/>
        <end position="86"/>
    </location>
</feature>
<feature type="region of interest" description="Head of neuraminidase" evidence="1">
    <location>
        <begin position="89"/>
        <end position="466"/>
    </location>
</feature>
<feature type="active site" description="Proton donor/acceptor" evidence="1">
    <location>
        <position position="149"/>
    </location>
</feature>
<feature type="active site" description="Nucleophile" evidence="1">
    <location>
        <position position="409"/>
    </location>
</feature>
<feature type="binding site" evidence="1">
    <location>
        <position position="116"/>
    </location>
    <ligand>
        <name>substrate</name>
    </ligand>
</feature>
<feature type="binding site" evidence="1">
    <location>
        <position position="150"/>
    </location>
    <ligand>
        <name>substrate</name>
    </ligand>
</feature>
<feature type="binding site" evidence="1">
    <location>
        <begin position="275"/>
        <end position="276"/>
    </location>
    <ligand>
        <name>substrate</name>
    </ligand>
</feature>
<feature type="binding site" evidence="1">
    <location>
        <position position="292"/>
    </location>
    <ligand>
        <name>substrate</name>
    </ligand>
</feature>
<feature type="binding site" evidence="1">
    <location>
        <position position="293"/>
    </location>
    <ligand>
        <name>Ca(2+)</name>
        <dbReference type="ChEBI" id="CHEBI:29108"/>
    </ligand>
</feature>
<feature type="binding site" evidence="1">
    <location>
        <position position="324"/>
    </location>
    <ligand>
        <name>Ca(2+)</name>
        <dbReference type="ChEBI" id="CHEBI:29108"/>
    </ligand>
</feature>
<feature type="binding site" evidence="1">
    <location>
        <position position="374"/>
    </location>
    <ligand>
        <name>substrate</name>
    </ligand>
</feature>
<feature type="glycosylation site" description="N-linked (GlcNAc...) asparagine; by host" evidence="1">
    <location>
        <position position="56"/>
    </location>
</feature>
<feature type="glycosylation site" description="N-linked (GlcNAc...) asparagine; by host" evidence="1">
    <location>
        <position position="64"/>
    </location>
</feature>
<feature type="glycosylation site" description="N-linked (GlcNAc...) asparagine; by host" evidence="1">
    <location>
        <position position="144"/>
    </location>
</feature>
<feature type="glycosylation site" description="N-linked (GlcNAc...) asparagine; by host" evidence="1">
    <location>
        <position position="284"/>
    </location>
</feature>
<feature type="disulfide bond" evidence="1">
    <location>
        <begin position="87"/>
        <end position="420"/>
    </location>
</feature>
<feature type="disulfide bond" evidence="1">
    <location>
        <begin position="122"/>
        <end position="127"/>
    </location>
</feature>
<feature type="disulfide bond" evidence="1">
    <location>
        <begin position="182"/>
        <end position="229"/>
    </location>
</feature>
<feature type="disulfide bond" evidence="1">
    <location>
        <begin position="231"/>
        <end position="236"/>
    </location>
</feature>
<feature type="disulfide bond" evidence="1">
    <location>
        <begin position="277"/>
        <end position="291"/>
    </location>
</feature>
<feature type="disulfide bond" evidence="1">
    <location>
        <begin position="279"/>
        <end position="289"/>
    </location>
</feature>
<feature type="disulfide bond" evidence="1">
    <location>
        <begin position="318"/>
        <end position="337"/>
    </location>
</feature>
<feature type="disulfide bond" evidence="1">
    <location>
        <begin position="424"/>
        <end position="447"/>
    </location>
</feature>
<organism>
    <name type="scientific">Influenza B virus (strain B/Maryland/1959)</name>
    <dbReference type="NCBI Taxonomy" id="11537"/>
    <lineage>
        <taxon>Viruses</taxon>
        <taxon>Riboviria</taxon>
        <taxon>Orthornavirae</taxon>
        <taxon>Negarnaviricota</taxon>
        <taxon>Polyploviricotina</taxon>
        <taxon>Insthoviricetes</taxon>
        <taxon>Articulavirales</taxon>
        <taxon>Orthomyxoviridae</taxon>
        <taxon>Betainfluenzavirus</taxon>
        <taxon>Betainfluenzavirus influenzae</taxon>
        <taxon>Influenza B virus</taxon>
    </lineage>
</organism>
<organismHost>
    <name type="scientific">Homo sapiens</name>
    <name type="common">Human</name>
    <dbReference type="NCBI Taxonomy" id="9606"/>
</organismHost>
<reference key="1">
    <citation type="journal article" date="1990" name="Virology">
        <title>Antigenic, sequence, and crystal variation in influenza B neuraminidase.</title>
        <authorList>
            <person name="Air G.M."/>
            <person name="Laver W.G."/>
            <person name="Luo M."/>
            <person name="Stray S.J."/>
            <person name="Legrone G."/>
            <person name="Webster R.G."/>
        </authorList>
    </citation>
    <scope>NUCLEOTIDE SEQUENCE [GENOMIC RNA]</scope>
</reference>
<reference key="2">
    <citation type="journal article" date="2005" name="N. Engl. J. Med.">
        <title>Neuraminidase inhibitors for influenza.</title>
        <authorList>
            <person name="Moscona A."/>
        </authorList>
    </citation>
    <scope>REVIEW</scope>
</reference>
<accession>P16195</accession>
<name>NRAM_INBMD</name>
<evidence type="ECO:0000255" key="1">
    <source>
        <dbReference type="HAMAP-Rule" id="MF_04071"/>
    </source>
</evidence>